<protein>
    <recommendedName>
        <fullName evidence="7">Galactitol 2-dehydrogenase (L-tagatose-forming)</fullName>
        <ecNumber evidence="4">1.1.1.406</ecNumber>
    </recommendedName>
    <alternativeName>
        <fullName evidence="6">Galactitol dehydrogenase</fullName>
        <shortName evidence="6">GDH</shortName>
        <shortName evidence="5">GatDH</shortName>
    </alternativeName>
    <alternativeName>
        <fullName evidence="5">Galactitol:NAD(+) 5-oxidoreductase</fullName>
    </alternativeName>
</protein>
<feature type="chain" id="PRO_0000454239" description="Galactitol 2-dehydrogenase (L-tagatose-forming)">
    <location>
        <begin position="1"/>
        <end position="254"/>
    </location>
</feature>
<feature type="active site" description="Proton acceptor" evidence="8">
    <location>
        <position position="159"/>
    </location>
</feature>
<feature type="binding site" evidence="3 9 10 11">
    <location>
        <begin position="21"/>
        <end position="23"/>
    </location>
    <ligand>
        <name>NAD(+)</name>
        <dbReference type="ChEBI" id="CHEBI:57540"/>
    </ligand>
</feature>
<feature type="binding site" evidence="3 9 10 11">
    <location>
        <position position="42"/>
    </location>
    <ligand>
        <name>NAD(+)</name>
        <dbReference type="ChEBI" id="CHEBI:57540"/>
    </ligand>
</feature>
<feature type="binding site" evidence="3 9 10 11">
    <location>
        <begin position="66"/>
        <end position="67"/>
    </location>
    <ligand>
        <name>NAD(+)</name>
        <dbReference type="ChEBI" id="CHEBI:57540"/>
    </ligand>
</feature>
<feature type="binding site" evidence="3 9 10 11">
    <location>
        <position position="159"/>
    </location>
    <ligand>
        <name>NAD(+)</name>
        <dbReference type="ChEBI" id="CHEBI:57540"/>
    </ligand>
</feature>
<feature type="binding site" evidence="3 9 10 11">
    <location>
        <position position="163"/>
    </location>
    <ligand>
        <name>NAD(+)</name>
        <dbReference type="ChEBI" id="CHEBI:57540"/>
    </ligand>
</feature>
<feature type="binding site" evidence="3 9 10 11">
    <location>
        <begin position="192"/>
        <end position="194"/>
    </location>
    <ligand>
        <name>NAD(+)</name>
        <dbReference type="ChEBI" id="CHEBI:57540"/>
    </ligand>
</feature>
<feature type="binding site" evidence="3 9 10 11">
    <location>
        <position position="254"/>
    </location>
    <ligand>
        <name>Mg(2+)</name>
        <dbReference type="ChEBI" id="CHEBI:18420"/>
    </ligand>
</feature>
<feature type="turn" evidence="13">
    <location>
        <begin position="3"/>
        <end position="7"/>
    </location>
</feature>
<feature type="strand" evidence="13">
    <location>
        <begin position="13"/>
        <end position="17"/>
    </location>
</feature>
<feature type="turn" evidence="13">
    <location>
        <begin position="18"/>
        <end position="20"/>
    </location>
</feature>
<feature type="helix" evidence="13">
    <location>
        <begin position="22"/>
        <end position="33"/>
    </location>
</feature>
<feature type="strand" evidence="13">
    <location>
        <begin position="37"/>
        <end position="43"/>
    </location>
</feature>
<feature type="helix" evidence="13">
    <location>
        <begin position="45"/>
        <end position="55"/>
    </location>
</feature>
<feature type="helix" evidence="13">
    <location>
        <begin position="56"/>
        <end position="58"/>
    </location>
</feature>
<feature type="strand" evidence="13">
    <location>
        <begin position="59"/>
        <end position="64"/>
    </location>
</feature>
<feature type="helix" evidence="13">
    <location>
        <begin position="70"/>
        <end position="83"/>
    </location>
</feature>
<feature type="strand" evidence="13">
    <location>
        <begin position="88"/>
        <end position="91"/>
    </location>
</feature>
<feature type="helix" evidence="14">
    <location>
        <begin position="101"/>
        <end position="103"/>
    </location>
</feature>
<feature type="helix" evidence="13">
    <location>
        <begin position="106"/>
        <end position="116"/>
    </location>
</feature>
<feature type="helix" evidence="13">
    <location>
        <begin position="118"/>
        <end position="134"/>
    </location>
</feature>
<feature type="strand" evidence="13">
    <location>
        <begin position="137"/>
        <end position="142"/>
    </location>
</feature>
<feature type="helix" evidence="13">
    <location>
        <begin position="145"/>
        <end position="147"/>
    </location>
</feature>
<feature type="strand" evidence="13">
    <location>
        <begin position="152"/>
        <end position="154"/>
    </location>
</feature>
<feature type="helix" evidence="13">
    <location>
        <begin position="157"/>
        <end position="177"/>
    </location>
</feature>
<feature type="helix" evidence="13">
    <location>
        <begin position="178"/>
        <end position="180"/>
    </location>
</feature>
<feature type="strand" evidence="13">
    <location>
        <begin position="182"/>
        <end position="189"/>
    </location>
</feature>
<feature type="strand" evidence="12">
    <location>
        <begin position="192"/>
        <end position="194"/>
    </location>
</feature>
<feature type="helix" evidence="13">
    <location>
        <begin position="195"/>
        <end position="201"/>
    </location>
</feature>
<feature type="helix" evidence="13">
    <location>
        <begin position="204"/>
        <end position="212"/>
    </location>
</feature>
<feature type="helix" evidence="13">
    <location>
        <begin position="222"/>
        <end position="233"/>
    </location>
</feature>
<feature type="helix" evidence="13">
    <location>
        <begin position="235"/>
        <end position="237"/>
    </location>
</feature>
<feature type="strand" evidence="13">
    <location>
        <begin position="244"/>
        <end position="248"/>
    </location>
</feature>
<feature type="helix" evidence="13">
    <location>
        <begin position="251"/>
        <end position="253"/>
    </location>
</feature>
<keyword id="KW-0002">3D-structure</keyword>
<keyword id="KW-0903">Direct protein sequencing</keyword>
<keyword id="KW-0460">Magnesium</keyword>
<keyword id="KW-0479">Metal-binding</keyword>
<keyword id="KW-0520">NAD</keyword>
<keyword id="KW-0547">Nucleotide-binding</keyword>
<keyword id="KW-0560">Oxidoreductase</keyword>
<sequence length="254" mass="26385">MDYRTVFRLDGACAAVTGAGSGIGLEICRAFAASGARLILIDREAAALDRAAQELGAAVAARIVADVTDAEAMTAAAAEAEAVAPVSILVNSAGIARLHDALETDDATWRQVMAVNVDGMFWASRAFGRAMVARGAGAIVNLGSMSGTIVNRPQFASSYMASKGAVHQLTRALAAEWAGRGVRVNALAPGYVATEMTLKMRERPELFETWLDMTPMGRCGEPSEIAAAALFLASPAASYVTGAILAVDGGYTVW</sequence>
<proteinExistence type="evidence at protein level"/>
<reference key="1">
    <citation type="submission" date="2009-01" db="EMBL/GenBank/DDBJ databases">
        <title>Investigations on modified regulation of the galactitol-dehydrogenase gene from Rhodobacter sphaeroides strain D compared to strains Si4 and 2.4.1 and electroenzymatic application potential of the GatDH enzyme.</title>
        <authorList>
            <person name="Kohring G.W."/>
            <person name="Kornberger P."/>
            <person name="Zimmer C.L."/>
            <person name="Giffhorn F."/>
        </authorList>
    </citation>
    <scope>NUCLEOTIDE SEQUENCE [GENOMIC DNA]</scope>
    <source>
        <strain>DSM 8371 / Si4</strain>
        <strain>DSM 8371 / Si4 / D</strain>
    </source>
</reference>
<reference key="2">
    <citation type="journal article" date="1995" name="Microbiology">
        <title>Enzyme evolution in Rhodobacter sphaeroides: selection of a mutant expressing a new galactitol dehydrogenase and biochemical characterization of the enzyme.</title>
        <authorList>
            <person name="Schneider K.H."/>
            <person name="Jakel G."/>
            <person name="Hoffmann R."/>
            <person name="Giffhorn F."/>
        </authorList>
    </citation>
    <scope>PROTEIN SEQUENCE OF 1-20</scope>
    <scope>FUNCTION</scope>
    <scope>CATALYTIC ACTIVITY</scope>
    <scope>COFACTOR</scope>
    <scope>ACTIVITY REGULATION</scope>
    <scope>BIOPHYSICOCHEMICAL PROPERTIES</scope>
    <scope>SUBUNIT</scope>
    <scope>INDUCTION</scope>
    <source>
        <strain>DSM 8371 / Si4 / D</strain>
    </source>
</reference>
<reference key="3">
    <citation type="journal article" date="2003" name="Commun. Agric. Appl. Biol. Sci.">
        <title>Stereoselective oxidation of aliphatic diols and reduction of hydroxy-ketones with galactitol dehydrogenase from Rhodobacter sphaeroides D.</title>
        <authorList>
            <person name="Kohring G.W."/>
            <person name="Wiehr P."/>
            <person name="Jeworski M."/>
            <person name="Giffhorn F."/>
        </authorList>
    </citation>
    <scope>FUNCTION</scope>
    <scope>BIOPHYSICOCHEMICAL PROPERTIES</scope>
    <scope>BIOTECHNOLOGY</scope>
    <source>
        <strain>DSM 8371 / Si4 / D</strain>
    </source>
</reference>
<reference key="4">
    <citation type="journal article" date="2009" name="Langmuir">
        <title>Modification of galactitol dehydrogenase from Rhodobacter sphaeroides D for immobilization on polycrystalline gold surfaces.</title>
        <authorList>
            <person name="Kornberger P."/>
            <person name="Gajdzik J."/>
            <person name="Natter H."/>
            <person name="Wenz G."/>
            <person name="Giffhorn F."/>
            <person name="Kohring G.W."/>
            <person name="Hempelmann R."/>
        </authorList>
    </citation>
    <scope>BIOTECHNOLOGY</scope>
    <source>
        <strain>DSM 8371 / Si4 / D</strain>
    </source>
</reference>
<reference evidence="9 10 11" key="5">
    <citation type="journal article" date="2010" name="J. Biol. Chem.">
        <title>Structural insight into substrate differentiation of the sugar-metabolizing enzyme galactitol dehydrogenase from Rhodobacter sphaeroides D.</title>
        <authorList>
            <person name="Carius Y."/>
            <person name="Christian H."/>
            <person name="Faust A."/>
            <person name="Zander U."/>
            <person name="Klink B.U."/>
            <person name="Kornberger P."/>
            <person name="Kohring G.W."/>
            <person name="Giffhorn F."/>
            <person name="Scheidig A.J."/>
        </authorList>
    </citation>
    <scope>X-RAY CRYSTALLOGRAPHY (1.25 ANGSTROMS) IN COMPLEXES WITH NAD; MAGNESIUM AND SUBSTRATES</scope>
    <scope>SUBUNIT</scope>
    <scope>ACTIVE SITE</scope>
    <source>
        <strain>DSM 8371 / Si4 / D</strain>
    </source>
</reference>
<comment type="function">
    <text evidence="1 4">Catalyzes the interconversion of galactitol to the rare sugar L-tagatose (PubMed:7551050). Shows activity with a wide range of substrates, and catalyzes the oxidation of a variety of polyvalent aliphatic alcohols and polyols to the corresponding ketones and ketoses, respectively, and in the reverse reaction, it reduces ketones with high stereoselectivity yielding the corresponding S-configurated alcohols (PubMed:15296184, PubMed:7551050). Shows high activity with D-threitol, xylitol, 1,2-hexanediol, 1,2-pentanediol, 2-hexanol, L-erythrulose, D-ribulose and acetoin (PubMed:7551050). Specific for NAD(+) (PubMed:7551050).</text>
</comment>
<comment type="catalytic activity">
    <reaction evidence="4">
        <text>galactitol + NAD(+) = keto-L-tagatose + NADH + H(+)</text>
        <dbReference type="Rhea" id="RHEA:51688"/>
        <dbReference type="ChEBI" id="CHEBI:15378"/>
        <dbReference type="ChEBI" id="CHEBI:16813"/>
        <dbReference type="ChEBI" id="CHEBI:57540"/>
        <dbReference type="ChEBI" id="CHEBI:57945"/>
        <dbReference type="ChEBI" id="CHEBI:134275"/>
        <dbReference type="EC" id="1.1.1.406"/>
    </reaction>
</comment>
<comment type="cofactor">
    <cofactor evidence="4">
        <name>a divalent metal cation</name>
        <dbReference type="ChEBI" id="CHEBI:60240"/>
    </cofactor>
    <text evidence="4">Can use Mg(2+), Mn(2+), Ni(2+) or Co(2+).</text>
</comment>
<comment type="activity regulation">
    <text evidence="4">Inhibited by the chelating agents EDTA and alpha,alpha'-dipyridyl (PubMed:7551050). Inhibited by Zn(2+) and Fe(2+) (PubMed:7551050).</text>
</comment>
<comment type="biophysicochemical properties">
    <kinetics>
        <KM evidence="4">240 mM for galactitol</KM>
        <KM evidence="4">85 mM for D-threitol</KM>
        <KM evidence="1">196 mM for (R,S)-1,2-propanediol</KM>
        <KM evidence="1">49 mM for (R,S)-1,2-butanediol</KM>
        <KM evidence="4">0.2 mM for 1,2-hexanediol</KM>
        <KM evidence="1">1.4 mM for (R,S)-1,2-hexanediol</KM>
        <KM evidence="1">0.5 mM for (R,S)-1,2,6-hexanetriol</KM>
        <KM evidence="4">12 uM for NAD(+) (in the presence of 100 mM 1,2-hexanediol)</KM>
        <KM evidence="4">62 mM for acetoin</KM>
        <KM evidence="4">144 mM for L-erythrulose</KM>
        <KM evidence="1">202 mM for hydroxyacetone</KM>
        <KM evidence="4">48 mM for dihydroxyacetone</KM>
        <KM evidence="1">26 mM for 1-hydroxy-2-butanone</KM>
        <KM evidence="1">1.4 mM for 2,3-hexanedione</KM>
        <KM evidence="1">4.2 mM for 3,4-hexanedione</KM>
        <KM evidence="4">4 uM for NADH (in the presence of 300 mM acetoin)</KM>
    </kinetics>
    <phDependence>
        <text evidence="4">Optimum pH is 10.5 with 1,2-hexanediol as substrate. Optimum pH is 4.0 with acetoin as substrate.</text>
    </phDependence>
</comment>
<comment type="subunit">
    <text evidence="3 4">Homotetramer.</text>
</comment>
<comment type="induction">
    <text evidence="4">Constitutively expressed.</text>
</comment>
<comment type="biotechnology">
    <text evidence="1 2">The wide substrate spectrum and the stereoselective mode of action make GDH a very interesting enzyme for the production of optically pure building blocks in the chemical synthesis of bioactive compounds (PubMed:15296184). GDH could be covalently immobilized via thiol bonds onto the surface of a gold electrode, which represents a proof-of-concept for the development of reactors for electrochemical synthon preparation using dehydrogenases (PubMed:19778027).</text>
</comment>
<comment type="similarity">
    <text evidence="7">Belongs to the short-chain dehydrogenases/reductases (SDR) family.</text>
</comment>
<evidence type="ECO:0000269" key="1">
    <source>
    </source>
</evidence>
<evidence type="ECO:0000269" key="2">
    <source>
    </source>
</evidence>
<evidence type="ECO:0000269" key="3">
    <source>
    </source>
</evidence>
<evidence type="ECO:0000269" key="4">
    <source>
    </source>
</evidence>
<evidence type="ECO:0000303" key="5">
    <source>
    </source>
</evidence>
<evidence type="ECO:0000303" key="6">
    <source>
    </source>
</evidence>
<evidence type="ECO:0000305" key="7"/>
<evidence type="ECO:0000305" key="8">
    <source>
    </source>
</evidence>
<evidence type="ECO:0007744" key="9">
    <source>
        <dbReference type="PDB" id="2WDZ"/>
    </source>
</evidence>
<evidence type="ECO:0007744" key="10">
    <source>
        <dbReference type="PDB" id="2WSB"/>
    </source>
</evidence>
<evidence type="ECO:0007744" key="11">
    <source>
        <dbReference type="PDB" id="3LQF"/>
    </source>
</evidence>
<evidence type="ECO:0007829" key="12">
    <source>
        <dbReference type="PDB" id="2WDZ"/>
    </source>
</evidence>
<evidence type="ECO:0007829" key="13">
    <source>
        <dbReference type="PDB" id="2WSB"/>
    </source>
</evidence>
<evidence type="ECO:0007829" key="14">
    <source>
        <dbReference type="PDB" id="3LQF"/>
    </source>
</evidence>
<dbReference type="EC" id="1.1.1.406" evidence="4"/>
<dbReference type="EMBL" id="FJ627003">
    <property type="protein sequence ID" value="ACM89305.1"/>
    <property type="molecule type" value="Genomic_DNA"/>
</dbReference>
<dbReference type="EMBL" id="FJ627004">
    <property type="protein sequence ID" value="ACM89307.1"/>
    <property type="molecule type" value="Genomic_DNA"/>
</dbReference>
<dbReference type="PDB" id="2WDZ">
    <property type="method" value="X-ray"/>
    <property type="resolution" value="1.95 A"/>
    <property type="chains" value="A/B/C/D=1-254"/>
</dbReference>
<dbReference type="PDB" id="2WSB">
    <property type="method" value="X-ray"/>
    <property type="resolution" value="1.25 A"/>
    <property type="chains" value="A/B/C/D=1-254"/>
</dbReference>
<dbReference type="PDB" id="3LQF">
    <property type="method" value="X-ray"/>
    <property type="resolution" value="1.80 A"/>
    <property type="chains" value="A/B/C/D=1-254"/>
</dbReference>
<dbReference type="PDBsum" id="2WDZ"/>
<dbReference type="PDBsum" id="2WSB"/>
<dbReference type="PDBsum" id="3LQF"/>
<dbReference type="SMR" id="C0KTJ6"/>
<dbReference type="BRENDA" id="1.1.1.406">
    <property type="organism ID" value="5383"/>
</dbReference>
<dbReference type="EvolutionaryTrace" id="C0KTJ6"/>
<dbReference type="GO" id="GO:0046872">
    <property type="term" value="F:metal ion binding"/>
    <property type="evidence" value="ECO:0007669"/>
    <property type="project" value="UniProtKB-KW"/>
</dbReference>
<dbReference type="GO" id="GO:0000166">
    <property type="term" value="F:nucleotide binding"/>
    <property type="evidence" value="ECO:0007669"/>
    <property type="project" value="UniProtKB-KW"/>
</dbReference>
<dbReference type="GO" id="GO:0016616">
    <property type="term" value="F:oxidoreductase activity, acting on the CH-OH group of donors, NAD or NADP as acceptor"/>
    <property type="evidence" value="ECO:0007669"/>
    <property type="project" value="TreeGrafter"/>
</dbReference>
<dbReference type="FunFam" id="3.40.50.720:FF:000084">
    <property type="entry name" value="Short-chain dehydrogenase reductase"/>
    <property type="match status" value="1"/>
</dbReference>
<dbReference type="Gene3D" id="3.40.50.720">
    <property type="entry name" value="NAD(P)-binding Rossmann-like Domain"/>
    <property type="match status" value="1"/>
</dbReference>
<dbReference type="InterPro" id="IPR036291">
    <property type="entry name" value="NAD(P)-bd_dom_sf"/>
</dbReference>
<dbReference type="InterPro" id="IPR002347">
    <property type="entry name" value="SDR_fam"/>
</dbReference>
<dbReference type="NCBIfam" id="NF005559">
    <property type="entry name" value="PRK07231.1"/>
    <property type="match status" value="1"/>
</dbReference>
<dbReference type="PANTHER" id="PTHR42760:SF115">
    <property type="entry name" value="3-OXOACYL-[ACYL-CARRIER-PROTEIN] REDUCTASE FABG"/>
    <property type="match status" value="1"/>
</dbReference>
<dbReference type="PANTHER" id="PTHR42760">
    <property type="entry name" value="SHORT-CHAIN DEHYDROGENASES/REDUCTASES FAMILY MEMBER"/>
    <property type="match status" value="1"/>
</dbReference>
<dbReference type="Pfam" id="PF13561">
    <property type="entry name" value="adh_short_C2"/>
    <property type="match status" value="1"/>
</dbReference>
<dbReference type="PRINTS" id="PR00081">
    <property type="entry name" value="GDHRDH"/>
</dbReference>
<dbReference type="PRINTS" id="PR00080">
    <property type="entry name" value="SDRFAMILY"/>
</dbReference>
<dbReference type="SUPFAM" id="SSF51735">
    <property type="entry name" value="NAD(P)-binding Rossmann-fold domains"/>
    <property type="match status" value="1"/>
</dbReference>
<organism>
    <name type="scientific">Cereibacter sphaeroides</name>
    <name type="common">Rhodobacter sphaeroides</name>
    <dbReference type="NCBI Taxonomy" id="1063"/>
    <lineage>
        <taxon>Bacteria</taxon>
        <taxon>Pseudomonadati</taxon>
        <taxon>Pseudomonadota</taxon>
        <taxon>Alphaproteobacteria</taxon>
        <taxon>Rhodobacterales</taxon>
        <taxon>Paracoccaceae</taxon>
        <taxon>Cereibacter</taxon>
    </lineage>
</organism>
<accession>C0KTJ6</accession>
<name>GATDH_CERSP</name>